<gene>
    <name evidence="1" type="primary">rnfB</name>
    <name type="ordered locus">VCM66_0972</name>
</gene>
<feature type="chain" id="PRO_1000194502" description="Ion-translocating oxidoreductase complex subunit B">
    <location>
        <begin position="1"/>
        <end position="195"/>
    </location>
</feature>
<feature type="domain" description="4Fe-4S" evidence="1">
    <location>
        <begin position="32"/>
        <end position="90"/>
    </location>
</feature>
<feature type="domain" description="4Fe-4S ferredoxin-type 1" evidence="1">
    <location>
        <begin position="105"/>
        <end position="134"/>
    </location>
</feature>
<feature type="domain" description="4Fe-4S ferredoxin-type 2" evidence="1">
    <location>
        <begin position="135"/>
        <end position="164"/>
    </location>
</feature>
<feature type="region of interest" description="Hydrophobic" evidence="1">
    <location>
        <begin position="1"/>
        <end position="26"/>
    </location>
</feature>
<feature type="binding site" evidence="1">
    <location>
        <position position="49"/>
    </location>
    <ligand>
        <name>[4Fe-4S] cluster</name>
        <dbReference type="ChEBI" id="CHEBI:49883"/>
        <label>1</label>
    </ligand>
</feature>
<feature type="binding site" evidence="1">
    <location>
        <position position="52"/>
    </location>
    <ligand>
        <name>[4Fe-4S] cluster</name>
        <dbReference type="ChEBI" id="CHEBI:49883"/>
        <label>1</label>
    </ligand>
</feature>
<feature type="binding site" evidence="1">
    <location>
        <position position="57"/>
    </location>
    <ligand>
        <name>[4Fe-4S] cluster</name>
        <dbReference type="ChEBI" id="CHEBI:49883"/>
        <label>1</label>
    </ligand>
</feature>
<feature type="binding site" evidence="1">
    <location>
        <position position="73"/>
    </location>
    <ligand>
        <name>[4Fe-4S] cluster</name>
        <dbReference type="ChEBI" id="CHEBI:49883"/>
        <label>1</label>
    </ligand>
</feature>
<feature type="binding site" evidence="1">
    <location>
        <position position="114"/>
    </location>
    <ligand>
        <name>[4Fe-4S] cluster</name>
        <dbReference type="ChEBI" id="CHEBI:49883"/>
        <label>2</label>
    </ligand>
</feature>
<feature type="binding site" evidence="1">
    <location>
        <position position="117"/>
    </location>
    <ligand>
        <name>[4Fe-4S] cluster</name>
        <dbReference type="ChEBI" id="CHEBI:49883"/>
        <label>2</label>
    </ligand>
</feature>
<feature type="binding site" evidence="1">
    <location>
        <position position="120"/>
    </location>
    <ligand>
        <name>[4Fe-4S] cluster</name>
        <dbReference type="ChEBI" id="CHEBI:49883"/>
        <label>2</label>
    </ligand>
</feature>
<feature type="binding site" evidence="1">
    <location>
        <position position="124"/>
    </location>
    <ligand>
        <name>[4Fe-4S] cluster</name>
        <dbReference type="ChEBI" id="CHEBI:49883"/>
        <label>3</label>
    </ligand>
</feature>
<feature type="binding site" evidence="1">
    <location>
        <position position="144"/>
    </location>
    <ligand>
        <name>[4Fe-4S] cluster</name>
        <dbReference type="ChEBI" id="CHEBI:49883"/>
        <label>3</label>
    </ligand>
</feature>
<feature type="binding site" evidence="1">
    <location>
        <position position="147"/>
    </location>
    <ligand>
        <name>[4Fe-4S] cluster</name>
        <dbReference type="ChEBI" id="CHEBI:49883"/>
        <label>3</label>
    </ligand>
</feature>
<feature type="binding site" evidence="1">
    <location>
        <position position="150"/>
    </location>
    <ligand>
        <name>[4Fe-4S] cluster</name>
        <dbReference type="ChEBI" id="CHEBI:49883"/>
        <label>3</label>
    </ligand>
</feature>
<feature type="binding site" evidence="1">
    <location>
        <position position="154"/>
    </location>
    <ligand>
        <name>[4Fe-4S] cluster</name>
        <dbReference type="ChEBI" id="CHEBI:49883"/>
        <label>2</label>
    </ligand>
</feature>
<name>RNFB_VIBCM</name>
<comment type="function">
    <text evidence="1">Part of a membrane-bound complex that couples electron transfer with translocation of ions across the membrane.</text>
</comment>
<comment type="cofactor">
    <cofactor evidence="1">
        <name>[4Fe-4S] cluster</name>
        <dbReference type="ChEBI" id="CHEBI:49883"/>
    </cofactor>
    <text evidence="1">Binds 3 [4Fe-4S] clusters.</text>
</comment>
<comment type="subunit">
    <text evidence="1">The complex is composed of six subunits: RnfA, RnfB, RnfC, RnfD, RnfE and RnfG.</text>
</comment>
<comment type="subcellular location">
    <subcellularLocation>
        <location evidence="1">Cell inner membrane</location>
    </subcellularLocation>
</comment>
<comment type="similarity">
    <text evidence="1">Belongs to the 4Fe4S bacterial-type ferredoxin family. RnfB subfamily.</text>
</comment>
<accession>C3LTR4</accession>
<evidence type="ECO:0000255" key="1">
    <source>
        <dbReference type="HAMAP-Rule" id="MF_00463"/>
    </source>
</evidence>
<sequence length="195" mass="20441">MSTIVIAVIALAALAAVFGAILGFASIRFKVEADPIVDQIDAILPQTQCGQCGYPGCRPYAEAIANGDAINKCPPGGQATIEKLADLMGVEVQDSAHDLDNKVKMVAFIHEDMCIGCTKCIQACPVDAIVGGNKAVHTVIKNECTGCDLCVAPCPTDCIEMIPVQTTPESWKWQLNAIPVVNVTDSAPAAQKSAN</sequence>
<dbReference type="EC" id="7.-.-.-" evidence="1"/>
<dbReference type="EMBL" id="CP001233">
    <property type="protein sequence ID" value="ACP05290.1"/>
    <property type="molecule type" value="Genomic_DNA"/>
</dbReference>
<dbReference type="KEGG" id="vcm:VCM66_0972"/>
<dbReference type="HOGENOM" id="CLU_063448_2_0_6"/>
<dbReference type="Proteomes" id="UP000001217">
    <property type="component" value="Chromosome I"/>
</dbReference>
<dbReference type="GO" id="GO:0005886">
    <property type="term" value="C:plasma membrane"/>
    <property type="evidence" value="ECO:0007669"/>
    <property type="project" value="UniProtKB-SubCell"/>
</dbReference>
<dbReference type="GO" id="GO:0051539">
    <property type="term" value="F:4 iron, 4 sulfur cluster binding"/>
    <property type="evidence" value="ECO:0007669"/>
    <property type="project" value="UniProtKB-UniRule"/>
</dbReference>
<dbReference type="GO" id="GO:0009055">
    <property type="term" value="F:electron transfer activity"/>
    <property type="evidence" value="ECO:0007669"/>
    <property type="project" value="InterPro"/>
</dbReference>
<dbReference type="GO" id="GO:0046872">
    <property type="term" value="F:metal ion binding"/>
    <property type="evidence" value="ECO:0007669"/>
    <property type="project" value="UniProtKB-KW"/>
</dbReference>
<dbReference type="GO" id="GO:0022900">
    <property type="term" value="P:electron transport chain"/>
    <property type="evidence" value="ECO:0007669"/>
    <property type="project" value="UniProtKB-UniRule"/>
</dbReference>
<dbReference type="FunFam" id="1.10.15.40:FF:000001">
    <property type="entry name" value="Ion-translocating oxidoreductase complex subunit B"/>
    <property type="match status" value="1"/>
</dbReference>
<dbReference type="Gene3D" id="3.30.70.20">
    <property type="match status" value="2"/>
</dbReference>
<dbReference type="Gene3D" id="1.10.15.40">
    <property type="entry name" value="Electron transport complex subunit B, putative Fe-S cluster"/>
    <property type="match status" value="1"/>
</dbReference>
<dbReference type="HAMAP" id="MF_00463">
    <property type="entry name" value="RsxB_RnfB"/>
    <property type="match status" value="1"/>
</dbReference>
<dbReference type="InterPro" id="IPR007202">
    <property type="entry name" value="4Fe-4S_dom"/>
</dbReference>
<dbReference type="InterPro" id="IPR017896">
    <property type="entry name" value="4Fe4S_Fe-S-bd"/>
</dbReference>
<dbReference type="InterPro" id="IPR017900">
    <property type="entry name" value="4Fe4S_Fe_S_CS"/>
</dbReference>
<dbReference type="InterPro" id="IPR010207">
    <property type="entry name" value="Elect_transpt_cplx_RnfB/RsxB"/>
</dbReference>
<dbReference type="InterPro" id="IPR016463">
    <property type="entry name" value="RnfB/RsxB_Proteobac"/>
</dbReference>
<dbReference type="InterPro" id="IPR050294">
    <property type="entry name" value="RnfB_subfamily"/>
</dbReference>
<dbReference type="NCBIfam" id="NF003475">
    <property type="entry name" value="PRK05113.1"/>
    <property type="match status" value="1"/>
</dbReference>
<dbReference type="NCBIfam" id="TIGR01944">
    <property type="entry name" value="rnfB"/>
    <property type="match status" value="1"/>
</dbReference>
<dbReference type="PANTHER" id="PTHR42859:SF3">
    <property type="entry name" value="ION-TRANSLOCATING OXIDOREDUCTASE COMPLEX SUBUNIT B"/>
    <property type="match status" value="1"/>
</dbReference>
<dbReference type="PANTHER" id="PTHR42859">
    <property type="entry name" value="OXIDOREDUCTASE"/>
    <property type="match status" value="1"/>
</dbReference>
<dbReference type="Pfam" id="PF14697">
    <property type="entry name" value="Fer4_21"/>
    <property type="match status" value="1"/>
</dbReference>
<dbReference type="Pfam" id="PF04060">
    <property type="entry name" value="FeS"/>
    <property type="match status" value="1"/>
</dbReference>
<dbReference type="PIRSF" id="PIRSF005784">
    <property type="entry name" value="Elect_transpt_RnfB"/>
    <property type="match status" value="1"/>
</dbReference>
<dbReference type="SUPFAM" id="SSF54862">
    <property type="entry name" value="4Fe-4S ferredoxins"/>
    <property type="match status" value="1"/>
</dbReference>
<dbReference type="PROSITE" id="PS51656">
    <property type="entry name" value="4FE4S"/>
    <property type="match status" value="1"/>
</dbReference>
<dbReference type="PROSITE" id="PS00198">
    <property type="entry name" value="4FE4S_FER_1"/>
    <property type="match status" value="2"/>
</dbReference>
<dbReference type="PROSITE" id="PS51379">
    <property type="entry name" value="4FE4S_FER_2"/>
    <property type="match status" value="2"/>
</dbReference>
<keyword id="KW-0004">4Fe-4S</keyword>
<keyword id="KW-0997">Cell inner membrane</keyword>
<keyword id="KW-1003">Cell membrane</keyword>
<keyword id="KW-0249">Electron transport</keyword>
<keyword id="KW-0408">Iron</keyword>
<keyword id="KW-0411">Iron-sulfur</keyword>
<keyword id="KW-0472">Membrane</keyword>
<keyword id="KW-0479">Metal-binding</keyword>
<keyword id="KW-0677">Repeat</keyword>
<keyword id="KW-1278">Translocase</keyword>
<keyword id="KW-0813">Transport</keyword>
<protein>
    <recommendedName>
        <fullName evidence="1">Ion-translocating oxidoreductase complex subunit B</fullName>
        <ecNumber evidence="1">7.-.-.-</ecNumber>
    </recommendedName>
    <alternativeName>
        <fullName evidence="1">Rnf electron transport complex subunit B</fullName>
    </alternativeName>
</protein>
<proteinExistence type="inferred from homology"/>
<reference key="1">
    <citation type="journal article" date="2008" name="PLoS ONE">
        <title>A recalibrated molecular clock and independent origins for the cholera pandemic clones.</title>
        <authorList>
            <person name="Feng L."/>
            <person name="Reeves P.R."/>
            <person name="Lan R."/>
            <person name="Ren Y."/>
            <person name="Gao C."/>
            <person name="Zhou Z."/>
            <person name="Ren Y."/>
            <person name="Cheng J."/>
            <person name="Wang W."/>
            <person name="Wang J."/>
            <person name="Qian W."/>
            <person name="Li D."/>
            <person name="Wang L."/>
        </authorList>
    </citation>
    <scope>NUCLEOTIDE SEQUENCE [LARGE SCALE GENOMIC DNA]</scope>
    <source>
        <strain>M66-2</strain>
    </source>
</reference>
<organism>
    <name type="scientific">Vibrio cholerae serotype O1 (strain M66-2)</name>
    <dbReference type="NCBI Taxonomy" id="579112"/>
    <lineage>
        <taxon>Bacteria</taxon>
        <taxon>Pseudomonadati</taxon>
        <taxon>Pseudomonadota</taxon>
        <taxon>Gammaproteobacteria</taxon>
        <taxon>Vibrionales</taxon>
        <taxon>Vibrionaceae</taxon>
        <taxon>Vibrio</taxon>
    </lineage>
</organism>